<reference key="1">
    <citation type="journal article" date="2006" name="Nat. Biotechnol.">
        <title>Complete genome sequence of the entomopathogenic and metabolically versatile soil bacterium Pseudomonas entomophila.</title>
        <authorList>
            <person name="Vodovar N."/>
            <person name="Vallenet D."/>
            <person name="Cruveiller S."/>
            <person name="Rouy Z."/>
            <person name="Barbe V."/>
            <person name="Acosta C."/>
            <person name="Cattolico L."/>
            <person name="Jubin C."/>
            <person name="Lajus A."/>
            <person name="Segurens B."/>
            <person name="Vacherie B."/>
            <person name="Wincker P."/>
            <person name="Weissenbach J."/>
            <person name="Lemaitre B."/>
            <person name="Medigue C."/>
            <person name="Boccard F."/>
        </authorList>
    </citation>
    <scope>NUCLEOTIDE SEQUENCE [LARGE SCALE GENOMIC DNA]</scope>
    <source>
        <strain>L48</strain>
    </source>
</reference>
<feature type="chain" id="PRO_1000021972" description="RNA pyrophosphohydrolase">
    <location>
        <begin position="1"/>
        <end position="159"/>
    </location>
</feature>
<feature type="domain" description="Nudix hydrolase" evidence="1">
    <location>
        <begin position="6"/>
        <end position="149"/>
    </location>
</feature>
<feature type="short sequence motif" description="Nudix box">
    <location>
        <begin position="38"/>
        <end position="59"/>
    </location>
</feature>
<gene>
    <name evidence="1" type="primary">rppH</name>
    <name evidence="1" type="synonym">nudH</name>
    <name type="ordered locus">PSEEN5239</name>
</gene>
<comment type="function">
    <text evidence="1">Accelerates the degradation of transcripts by removing pyrophosphate from the 5'-end of triphosphorylated RNA, leading to a more labile monophosphorylated state that can stimulate subsequent ribonuclease cleavage.</text>
</comment>
<comment type="cofactor">
    <cofactor evidence="1">
        <name>a divalent metal cation</name>
        <dbReference type="ChEBI" id="CHEBI:60240"/>
    </cofactor>
</comment>
<comment type="similarity">
    <text evidence="1">Belongs to the Nudix hydrolase family. RppH subfamily.</text>
</comment>
<sequence length="159" mass="18838">MIDPDGFRPNVGIILTNDAGQVLWARRINQDAWQFPQGGINPDETPEDALYRELNEEVGLERDDVEILACTRGWLRYRLPQRLVRTHSQPLCIGQKQKWFLLRLVSNEQRVRMDLTGKPEFDGWRWVSYWYPLGQVVTFKREVYRRALKELAPRLLTRD</sequence>
<name>RPPH_PSEE4</name>
<protein>
    <recommendedName>
        <fullName evidence="1">RNA pyrophosphohydrolase</fullName>
        <ecNumber evidence="1">3.6.1.-</ecNumber>
    </recommendedName>
    <alternativeName>
        <fullName evidence="1">(Di)nucleoside polyphosphate hydrolase</fullName>
    </alternativeName>
</protein>
<evidence type="ECO:0000255" key="1">
    <source>
        <dbReference type="HAMAP-Rule" id="MF_00298"/>
    </source>
</evidence>
<proteinExistence type="inferred from homology"/>
<organism>
    <name type="scientific">Pseudomonas entomophila (strain L48)</name>
    <dbReference type="NCBI Taxonomy" id="384676"/>
    <lineage>
        <taxon>Bacteria</taxon>
        <taxon>Pseudomonadati</taxon>
        <taxon>Pseudomonadota</taxon>
        <taxon>Gammaproteobacteria</taxon>
        <taxon>Pseudomonadales</taxon>
        <taxon>Pseudomonadaceae</taxon>
        <taxon>Pseudomonas</taxon>
    </lineage>
</organism>
<accession>Q1I3C2</accession>
<keyword id="KW-0378">Hydrolase</keyword>
<dbReference type="EC" id="3.6.1.-" evidence="1"/>
<dbReference type="EMBL" id="CT573326">
    <property type="protein sequence ID" value="CAK17864.1"/>
    <property type="molecule type" value="Genomic_DNA"/>
</dbReference>
<dbReference type="RefSeq" id="WP_003249017.1">
    <property type="nucleotide sequence ID" value="NC_008027.1"/>
</dbReference>
<dbReference type="SMR" id="Q1I3C2"/>
<dbReference type="STRING" id="384676.PSEEN5239"/>
<dbReference type="KEGG" id="pen:PSEEN5239"/>
<dbReference type="eggNOG" id="COG0494">
    <property type="taxonomic scope" value="Bacteria"/>
</dbReference>
<dbReference type="HOGENOM" id="CLU_087195_3_1_6"/>
<dbReference type="OrthoDB" id="9816040at2"/>
<dbReference type="Proteomes" id="UP000000658">
    <property type="component" value="Chromosome"/>
</dbReference>
<dbReference type="GO" id="GO:0005737">
    <property type="term" value="C:cytoplasm"/>
    <property type="evidence" value="ECO:0007669"/>
    <property type="project" value="TreeGrafter"/>
</dbReference>
<dbReference type="GO" id="GO:0034353">
    <property type="term" value="F:mRNA 5'-diphosphatase activity"/>
    <property type="evidence" value="ECO:0007669"/>
    <property type="project" value="TreeGrafter"/>
</dbReference>
<dbReference type="GO" id="GO:0006402">
    <property type="term" value="P:mRNA catabolic process"/>
    <property type="evidence" value="ECO:0007669"/>
    <property type="project" value="TreeGrafter"/>
</dbReference>
<dbReference type="CDD" id="cd03671">
    <property type="entry name" value="NUDIX_Ap4A_hydrolase_plant_like"/>
    <property type="match status" value="1"/>
</dbReference>
<dbReference type="FunFam" id="3.90.79.10:FF:000001">
    <property type="entry name" value="RNA pyrophosphohydrolase"/>
    <property type="match status" value="1"/>
</dbReference>
<dbReference type="Gene3D" id="3.90.79.10">
    <property type="entry name" value="Nucleoside Triphosphate Pyrophosphohydrolase"/>
    <property type="match status" value="1"/>
</dbReference>
<dbReference type="HAMAP" id="MF_00298">
    <property type="entry name" value="Nudix_RppH"/>
    <property type="match status" value="1"/>
</dbReference>
<dbReference type="InterPro" id="IPR020476">
    <property type="entry name" value="Nudix_hydrolase"/>
</dbReference>
<dbReference type="InterPro" id="IPR015797">
    <property type="entry name" value="NUDIX_hydrolase-like_dom_sf"/>
</dbReference>
<dbReference type="InterPro" id="IPR020084">
    <property type="entry name" value="NUDIX_hydrolase_CS"/>
</dbReference>
<dbReference type="InterPro" id="IPR000086">
    <property type="entry name" value="NUDIX_hydrolase_dom"/>
</dbReference>
<dbReference type="InterPro" id="IPR022927">
    <property type="entry name" value="RppH"/>
</dbReference>
<dbReference type="NCBIfam" id="NF001934">
    <property type="entry name" value="PRK00714.1-1"/>
    <property type="match status" value="1"/>
</dbReference>
<dbReference type="NCBIfam" id="NF001937">
    <property type="entry name" value="PRK00714.1-4"/>
    <property type="match status" value="1"/>
</dbReference>
<dbReference type="NCBIfam" id="NF001938">
    <property type="entry name" value="PRK00714.1-5"/>
    <property type="match status" value="1"/>
</dbReference>
<dbReference type="PANTHER" id="PTHR23114">
    <property type="entry name" value="M7GPPPN-MRNA HYDROLASE"/>
    <property type="match status" value="1"/>
</dbReference>
<dbReference type="PANTHER" id="PTHR23114:SF17">
    <property type="entry name" value="M7GPPPN-MRNA HYDROLASE"/>
    <property type="match status" value="1"/>
</dbReference>
<dbReference type="Pfam" id="PF00293">
    <property type="entry name" value="NUDIX"/>
    <property type="match status" value="1"/>
</dbReference>
<dbReference type="PRINTS" id="PR00502">
    <property type="entry name" value="NUDIXFAMILY"/>
</dbReference>
<dbReference type="SUPFAM" id="SSF55811">
    <property type="entry name" value="Nudix"/>
    <property type="match status" value="1"/>
</dbReference>
<dbReference type="PROSITE" id="PS51462">
    <property type="entry name" value="NUDIX"/>
    <property type="match status" value="1"/>
</dbReference>
<dbReference type="PROSITE" id="PS00893">
    <property type="entry name" value="NUDIX_BOX"/>
    <property type="match status" value="1"/>
</dbReference>